<organism>
    <name type="scientific">Oryza sativa subsp. japonica</name>
    <name type="common">Rice</name>
    <dbReference type="NCBI Taxonomy" id="39947"/>
    <lineage>
        <taxon>Eukaryota</taxon>
        <taxon>Viridiplantae</taxon>
        <taxon>Streptophyta</taxon>
        <taxon>Embryophyta</taxon>
        <taxon>Tracheophyta</taxon>
        <taxon>Spermatophyta</taxon>
        <taxon>Magnoliopsida</taxon>
        <taxon>Liliopsida</taxon>
        <taxon>Poales</taxon>
        <taxon>Poaceae</taxon>
        <taxon>BOP clade</taxon>
        <taxon>Oryzoideae</taxon>
        <taxon>Oryzeae</taxon>
        <taxon>Oryzinae</taxon>
        <taxon>Oryza</taxon>
        <taxon>Oryza sativa</taxon>
    </lineage>
</organism>
<comment type="subcellular location">
    <subcellularLocation>
        <location evidence="1">Nucleus</location>
    </subcellularLocation>
</comment>
<keyword id="KW-0238">DNA-binding</keyword>
<keyword id="KW-0539">Nucleus</keyword>
<keyword id="KW-1185">Reference proteome</keyword>
<keyword id="KW-0804">Transcription</keyword>
<keyword id="KW-0805">Transcription regulation</keyword>
<dbReference type="EMBL" id="AP005608">
    <property type="protein sequence ID" value="BAD19926.1"/>
    <property type="molecule type" value="Genomic_DNA"/>
</dbReference>
<dbReference type="EMBL" id="AP005696">
    <property type="protein sequence ID" value="BAD19989.1"/>
    <property type="molecule type" value="Genomic_DNA"/>
</dbReference>
<dbReference type="EMBL" id="AP008208">
    <property type="protein sequence ID" value="BAH91671.1"/>
    <property type="molecule type" value="Genomic_DNA"/>
</dbReference>
<dbReference type="EMBL" id="AP014958">
    <property type="protein sequence ID" value="BAS78522.1"/>
    <property type="molecule type" value="Genomic_DNA"/>
</dbReference>
<dbReference type="EMBL" id="CM000139">
    <property type="protein sequence ID" value="EAZ22918.1"/>
    <property type="molecule type" value="Genomic_DNA"/>
</dbReference>
<dbReference type="EMBL" id="AK242688">
    <property type="status" value="NOT_ANNOTATED_CDS"/>
    <property type="molecule type" value="mRNA"/>
</dbReference>
<dbReference type="RefSeq" id="XP_015625111.1">
    <property type="nucleotide sequence ID" value="XM_015769625.1"/>
</dbReference>
<dbReference type="SMR" id="Q6K3B2"/>
<dbReference type="FunCoup" id="Q6K3B2">
    <property type="interactions" value="6"/>
</dbReference>
<dbReference type="PaxDb" id="39947-Q6K3B2"/>
<dbReference type="EnsemblPlants" id="Os02t0455800-01">
    <property type="protein sequence ID" value="Os02t0455800-01"/>
    <property type="gene ID" value="Os02g0455800"/>
</dbReference>
<dbReference type="Gramene" id="Os02t0455800-01">
    <property type="protein sequence ID" value="Os02t0455800-01"/>
    <property type="gene ID" value="Os02g0455800"/>
</dbReference>
<dbReference type="KEGG" id="dosa:Os02g0455800"/>
<dbReference type="HOGENOM" id="CLU_1167334_0_0_1"/>
<dbReference type="InParanoid" id="Q6K3B2"/>
<dbReference type="OMA" id="IPEEHAW"/>
<dbReference type="OrthoDB" id="608326at2759"/>
<dbReference type="Proteomes" id="UP000000763">
    <property type="component" value="Chromosome 2"/>
</dbReference>
<dbReference type="Proteomes" id="UP000007752">
    <property type="component" value="Chromosome 2"/>
</dbReference>
<dbReference type="Proteomes" id="UP000059680">
    <property type="component" value="Chromosome 2"/>
</dbReference>
<dbReference type="GO" id="GO:0005634">
    <property type="term" value="C:nucleus"/>
    <property type="evidence" value="ECO:0007669"/>
    <property type="project" value="UniProtKB-SubCell"/>
</dbReference>
<dbReference type="GO" id="GO:0003677">
    <property type="term" value="F:DNA binding"/>
    <property type="evidence" value="ECO:0007669"/>
    <property type="project" value="UniProtKB-KW"/>
</dbReference>
<dbReference type="GO" id="GO:0003700">
    <property type="term" value="F:DNA-binding transcription factor activity"/>
    <property type="evidence" value="ECO:0007669"/>
    <property type="project" value="InterPro"/>
</dbReference>
<dbReference type="CDD" id="cd10017">
    <property type="entry name" value="B3_DNA"/>
    <property type="match status" value="1"/>
</dbReference>
<dbReference type="Gene3D" id="2.40.330.10">
    <property type="entry name" value="DNA-binding pseudobarrel domain"/>
    <property type="match status" value="1"/>
</dbReference>
<dbReference type="InterPro" id="IPR003340">
    <property type="entry name" value="B3_DNA-bd"/>
</dbReference>
<dbReference type="InterPro" id="IPR015300">
    <property type="entry name" value="DNA-bd_pseudobarrel_sf"/>
</dbReference>
<dbReference type="InterPro" id="IPR044800">
    <property type="entry name" value="LEC2-like"/>
</dbReference>
<dbReference type="PANTHER" id="PTHR31140:SF139">
    <property type="entry name" value="B3 DOMAIN-CONTAINING PROTEIN OS02G0455900-RELATED"/>
    <property type="match status" value="1"/>
</dbReference>
<dbReference type="PANTHER" id="PTHR31140">
    <property type="entry name" value="B3 DOMAIN-CONTAINING TRANSCRIPTION FACTOR ABI3"/>
    <property type="match status" value="1"/>
</dbReference>
<dbReference type="Pfam" id="PF02362">
    <property type="entry name" value="B3"/>
    <property type="match status" value="1"/>
</dbReference>
<dbReference type="SMART" id="SM01019">
    <property type="entry name" value="B3"/>
    <property type="match status" value="1"/>
</dbReference>
<dbReference type="SUPFAM" id="SSF101936">
    <property type="entry name" value="DNA-binding pseudobarrel domain"/>
    <property type="match status" value="1"/>
</dbReference>
<dbReference type="PROSITE" id="PS50863">
    <property type="entry name" value="B3"/>
    <property type="match status" value="1"/>
</dbReference>
<reference key="1">
    <citation type="journal article" date="2005" name="Nature">
        <title>The map-based sequence of the rice genome.</title>
        <authorList>
            <consortium name="International rice genome sequencing project (IRGSP)"/>
        </authorList>
    </citation>
    <scope>NUCLEOTIDE SEQUENCE [LARGE SCALE GENOMIC DNA]</scope>
    <source>
        <strain>cv. Nipponbare</strain>
    </source>
</reference>
<reference key="2">
    <citation type="journal article" date="2008" name="Nucleic Acids Res.">
        <title>The rice annotation project database (RAP-DB): 2008 update.</title>
        <authorList>
            <consortium name="The rice annotation project (RAP)"/>
        </authorList>
    </citation>
    <scope>GENOME REANNOTATION</scope>
    <source>
        <strain>cv. Nipponbare</strain>
    </source>
</reference>
<reference key="3">
    <citation type="journal article" date="2013" name="Rice">
        <title>Improvement of the Oryza sativa Nipponbare reference genome using next generation sequence and optical map data.</title>
        <authorList>
            <person name="Kawahara Y."/>
            <person name="de la Bastide M."/>
            <person name="Hamilton J.P."/>
            <person name="Kanamori H."/>
            <person name="McCombie W.R."/>
            <person name="Ouyang S."/>
            <person name="Schwartz D.C."/>
            <person name="Tanaka T."/>
            <person name="Wu J."/>
            <person name="Zhou S."/>
            <person name="Childs K.L."/>
            <person name="Davidson R.M."/>
            <person name="Lin H."/>
            <person name="Quesada-Ocampo L."/>
            <person name="Vaillancourt B."/>
            <person name="Sakai H."/>
            <person name="Lee S.S."/>
            <person name="Kim J."/>
            <person name="Numa H."/>
            <person name="Itoh T."/>
            <person name="Buell C.R."/>
            <person name="Matsumoto T."/>
        </authorList>
    </citation>
    <scope>GENOME REANNOTATION</scope>
    <source>
        <strain>cv. Nipponbare</strain>
    </source>
</reference>
<reference key="4">
    <citation type="journal article" date="2005" name="PLoS Biol.">
        <title>The genomes of Oryza sativa: a history of duplications.</title>
        <authorList>
            <person name="Yu J."/>
            <person name="Wang J."/>
            <person name="Lin W."/>
            <person name="Li S."/>
            <person name="Li H."/>
            <person name="Zhou J."/>
            <person name="Ni P."/>
            <person name="Dong W."/>
            <person name="Hu S."/>
            <person name="Zeng C."/>
            <person name="Zhang J."/>
            <person name="Zhang Y."/>
            <person name="Li R."/>
            <person name="Xu Z."/>
            <person name="Li S."/>
            <person name="Li X."/>
            <person name="Zheng H."/>
            <person name="Cong L."/>
            <person name="Lin L."/>
            <person name="Yin J."/>
            <person name="Geng J."/>
            <person name="Li G."/>
            <person name="Shi J."/>
            <person name="Liu J."/>
            <person name="Lv H."/>
            <person name="Li J."/>
            <person name="Wang J."/>
            <person name="Deng Y."/>
            <person name="Ran L."/>
            <person name="Shi X."/>
            <person name="Wang X."/>
            <person name="Wu Q."/>
            <person name="Li C."/>
            <person name="Ren X."/>
            <person name="Wang J."/>
            <person name="Wang X."/>
            <person name="Li D."/>
            <person name="Liu D."/>
            <person name="Zhang X."/>
            <person name="Ji Z."/>
            <person name="Zhao W."/>
            <person name="Sun Y."/>
            <person name="Zhang Z."/>
            <person name="Bao J."/>
            <person name="Han Y."/>
            <person name="Dong L."/>
            <person name="Ji J."/>
            <person name="Chen P."/>
            <person name="Wu S."/>
            <person name="Liu J."/>
            <person name="Xiao Y."/>
            <person name="Bu D."/>
            <person name="Tan J."/>
            <person name="Yang L."/>
            <person name="Ye C."/>
            <person name="Zhang J."/>
            <person name="Xu J."/>
            <person name="Zhou Y."/>
            <person name="Yu Y."/>
            <person name="Zhang B."/>
            <person name="Zhuang S."/>
            <person name="Wei H."/>
            <person name="Liu B."/>
            <person name="Lei M."/>
            <person name="Yu H."/>
            <person name="Li Y."/>
            <person name="Xu H."/>
            <person name="Wei S."/>
            <person name="He X."/>
            <person name="Fang L."/>
            <person name="Zhang Z."/>
            <person name="Zhang Y."/>
            <person name="Huang X."/>
            <person name="Su Z."/>
            <person name="Tong W."/>
            <person name="Li J."/>
            <person name="Tong Z."/>
            <person name="Li S."/>
            <person name="Ye J."/>
            <person name="Wang L."/>
            <person name="Fang L."/>
            <person name="Lei T."/>
            <person name="Chen C.-S."/>
            <person name="Chen H.-C."/>
            <person name="Xu Z."/>
            <person name="Li H."/>
            <person name="Huang H."/>
            <person name="Zhang F."/>
            <person name="Xu H."/>
            <person name="Li N."/>
            <person name="Zhao C."/>
            <person name="Li S."/>
            <person name="Dong L."/>
            <person name="Huang Y."/>
            <person name="Li L."/>
            <person name="Xi Y."/>
            <person name="Qi Q."/>
            <person name="Li W."/>
            <person name="Zhang B."/>
            <person name="Hu W."/>
            <person name="Zhang Y."/>
            <person name="Tian X."/>
            <person name="Jiao Y."/>
            <person name="Liang X."/>
            <person name="Jin J."/>
            <person name="Gao L."/>
            <person name="Zheng W."/>
            <person name="Hao B."/>
            <person name="Liu S.-M."/>
            <person name="Wang W."/>
            <person name="Yuan L."/>
            <person name="Cao M."/>
            <person name="McDermott J."/>
            <person name="Samudrala R."/>
            <person name="Wang J."/>
            <person name="Wong G.K.-S."/>
            <person name="Yang H."/>
        </authorList>
    </citation>
    <scope>NUCLEOTIDE SEQUENCE [LARGE SCALE GENOMIC DNA]</scope>
    <source>
        <strain>cv. Nipponbare</strain>
    </source>
</reference>
<reference key="5">
    <citation type="submission" date="2006-10" db="EMBL/GenBank/DDBJ databases">
        <title>Oryza sativa full length cDNA.</title>
        <authorList>
            <consortium name="The rice full-length cDNA consortium"/>
        </authorList>
    </citation>
    <scope>NUCLEOTIDE SEQUENCE [LARGE SCALE MRNA]</scope>
    <source>
        <strain>cv. Nipponbare</strain>
    </source>
</reference>
<evidence type="ECO:0000255" key="1">
    <source>
        <dbReference type="PROSITE-ProRule" id="PRU00326"/>
    </source>
</evidence>
<evidence type="ECO:0000256" key="2">
    <source>
        <dbReference type="SAM" id="MobiDB-lite"/>
    </source>
</evidence>
<evidence type="ECO:0000305" key="3"/>
<name>Y2558_ORYSJ</name>
<accession>Q6K3B2</accession>
<accession>C7IYQ8</accession>
<protein>
    <recommendedName>
        <fullName>B3 domain-containing protein Os02g0455800</fullName>
    </recommendedName>
</protein>
<proteinExistence type="evidence at transcript level"/>
<sequence length="267" mass="29360">MAASLPLSAAIVGAEESVDKEVLEMEYLFEKFLMPSDLCSNTEWLGIPEEHVRKFGMMLEDRDGYSVIFFQDGVVPGKLWCFRYWKSNGVHGLTKGWRCFVREKGLKAGDTISFFRGSACGRLFICCRLGTHATFASSSTLHHGFSMPPPPARPLVGLQSGMLARDVPSLGQARLHDGNQDGGGAPSRHVPSSGRRVEAQLSRVSSRRQRRTMKHSIPEPTIETPPILESMFLIAAPPAVKCLRLFGVNIYVLPVSSSGQPKQESSP</sequence>
<gene>
    <name type="ordered locus">Os02g0455800</name>
    <name type="ordered locus">LOC_Os02g25820</name>
    <name type="ORF">OsJ_06608</name>
    <name type="ORF">OSJNBa0008C07.35</name>
    <name type="ORF">OSJNBa0063K04.11</name>
</gene>
<feature type="chain" id="PRO_0000376946" description="B3 domain-containing protein Os02g0455800">
    <location>
        <begin position="1"/>
        <end position="267"/>
    </location>
</feature>
<feature type="DNA-binding region" description="TF-B3" evidence="1">
    <location>
        <begin position="30"/>
        <end position="131"/>
    </location>
</feature>
<feature type="region of interest" description="Disordered" evidence="2">
    <location>
        <begin position="172"/>
        <end position="221"/>
    </location>
</feature>
<feature type="compositionally biased region" description="Basic residues" evidence="2">
    <location>
        <begin position="205"/>
        <end position="214"/>
    </location>
</feature>
<feature type="sequence conflict" description="In Ref. 5; AK242688." evidence="3" ref="5">
    <original>SRR</original>
    <variation>ARP</variation>
    <location>
        <begin position="206"/>
        <end position="208"/>
    </location>
</feature>